<dbReference type="EC" id="6.1.1.7" evidence="1"/>
<dbReference type="EMBL" id="CP000095">
    <property type="protein sequence ID" value="AAZ58865.1"/>
    <property type="molecule type" value="Genomic_DNA"/>
</dbReference>
<dbReference type="RefSeq" id="WP_011294009.1">
    <property type="nucleotide sequence ID" value="NC_007335.2"/>
</dbReference>
<dbReference type="SMR" id="Q46I13"/>
<dbReference type="STRING" id="59920.PMN2A_1377"/>
<dbReference type="KEGG" id="pmn:PMN2A_1377"/>
<dbReference type="HOGENOM" id="CLU_004485_1_0_3"/>
<dbReference type="OrthoDB" id="9803884at2"/>
<dbReference type="PhylomeDB" id="Q46I13"/>
<dbReference type="Proteomes" id="UP000002535">
    <property type="component" value="Chromosome"/>
</dbReference>
<dbReference type="GO" id="GO:0005829">
    <property type="term" value="C:cytosol"/>
    <property type="evidence" value="ECO:0007669"/>
    <property type="project" value="TreeGrafter"/>
</dbReference>
<dbReference type="GO" id="GO:0004813">
    <property type="term" value="F:alanine-tRNA ligase activity"/>
    <property type="evidence" value="ECO:0007669"/>
    <property type="project" value="UniProtKB-UniRule"/>
</dbReference>
<dbReference type="GO" id="GO:0002161">
    <property type="term" value="F:aminoacyl-tRNA deacylase activity"/>
    <property type="evidence" value="ECO:0007669"/>
    <property type="project" value="TreeGrafter"/>
</dbReference>
<dbReference type="GO" id="GO:0005524">
    <property type="term" value="F:ATP binding"/>
    <property type="evidence" value="ECO:0007669"/>
    <property type="project" value="UniProtKB-UniRule"/>
</dbReference>
<dbReference type="GO" id="GO:0000049">
    <property type="term" value="F:tRNA binding"/>
    <property type="evidence" value="ECO:0007669"/>
    <property type="project" value="UniProtKB-KW"/>
</dbReference>
<dbReference type="GO" id="GO:0008270">
    <property type="term" value="F:zinc ion binding"/>
    <property type="evidence" value="ECO:0007669"/>
    <property type="project" value="UniProtKB-UniRule"/>
</dbReference>
<dbReference type="GO" id="GO:0006419">
    <property type="term" value="P:alanyl-tRNA aminoacylation"/>
    <property type="evidence" value="ECO:0007669"/>
    <property type="project" value="UniProtKB-UniRule"/>
</dbReference>
<dbReference type="CDD" id="cd00673">
    <property type="entry name" value="AlaRS_core"/>
    <property type="match status" value="1"/>
</dbReference>
<dbReference type="FunFam" id="2.40.30.130:FF:000001">
    <property type="entry name" value="Alanine--tRNA ligase"/>
    <property type="match status" value="1"/>
</dbReference>
<dbReference type="FunFam" id="3.10.310.40:FF:000001">
    <property type="entry name" value="Alanine--tRNA ligase"/>
    <property type="match status" value="1"/>
</dbReference>
<dbReference type="FunFam" id="3.30.54.20:FF:000001">
    <property type="entry name" value="Alanine--tRNA ligase"/>
    <property type="match status" value="1"/>
</dbReference>
<dbReference type="FunFam" id="3.30.930.10:FF:000004">
    <property type="entry name" value="Alanine--tRNA ligase"/>
    <property type="match status" value="1"/>
</dbReference>
<dbReference type="FunFam" id="3.30.980.10:FF:000004">
    <property type="entry name" value="Alanine--tRNA ligase, cytoplasmic"/>
    <property type="match status" value="1"/>
</dbReference>
<dbReference type="Gene3D" id="2.40.30.130">
    <property type="match status" value="1"/>
</dbReference>
<dbReference type="Gene3D" id="3.10.310.40">
    <property type="match status" value="1"/>
</dbReference>
<dbReference type="Gene3D" id="3.30.54.20">
    <property type="match status" value="1"/>
</dbReference>
<dbReference type="Gene3D" id="6.10.250.550">
    <property type="match status" value="1"/>
</dbReference>
<dbReference type="Gene3D" id="3.30.930.10">
    <property type="entry name" value="Bira Bifunctional Protein, Domain 2"/>
    <property type="match status" value="1"/>
</dbReference>
<dbReference type="Gene3D" id="3.30.980.10">
    <property type="entry name" value="Threonyl-trna Synthetase, Chain A, domain 2"/>
    <property type="match status" value="1"/>
</dbReference>
<dbReference type="HAMAP" id="MF_00036_B">
    <property type="entry name" value="Ala_tRNA_synth_B"/>
    <property type="match status" value="1"/>
</dbReference>
<dbReference type="InterPro" id="IPR045864">
    <property type="entry name" value="aa-tRNA-synth_II/BPL/LPL"/>
</dbReference>
<dbReference type="InterPro" id="IPR002318">
    <property type="entry name" value="Ala-tRNA-lgiase_IIc"/>
</dbReference>
<dbReference type="InterPro" id="IPR018162">
    <property type="entry name" value="Ala-tRNA-ligase_IIc_anticod-bd"/>
</dbReference>
<dbReference type="InterPro" id="IPR018165">
    <property type="entry name" value="Ala-tRNA-synth_IIc_core"/>
</dbReference>
<dbReference type="InterPro" id="IPR018164">
    <property type="entry name" value="Ala-tRNA-synth_IIc_N"/>
</dbReference>
<dbReference type="InterPro" id="IPR050058">
    <property type="entry name" value="Ala-tRNA_ligase"/>
</dbReference>
<dbReference type="InterPro" id="IPR023033">
    <property type="entry name" value="Ala_tRNA_ligase_euk/bac"/>
</dbReference>
<dbReference type="InterPro" id="IPR003156">
    <property type="entry name" value="DHHA1_dom"/>
</dbReference>
<dbReference type="InterPro" id="IPR018163">
    <property type="entry name" value="Thr/Ala-tRNA-synth_IIc_edit"/>
</dbReference>
<dbReference type="InterPro" id="IPR009000">
    <property type="entry name" value="Transl_B-barrel_sf"/>
</dbReference>
<dbReference type="InterPro" id="IPR012947">
    <property type="entry name" value="tRNA_SAD"/>
</dbReference>
<dbReference type="NCBIfam" id="TIGR00344">
    <property type="entry name" value="alaS"/>
    <property type="match status" value="1"/>
</dbReference>
<dbReference type="PANTHER" id="PTHR11777:SF9">
    <property type="entry name" value="ALANINE--TRNA LIGASE, CYTOPLASMIC"/>
    <property type="match status" value="1"/>
</dbReference>
<dbReference type="PANTHER" id="PTHR11777">
    <property type="entry name" value="ALANYL-TRNA SYNTHETASE"/>
    <property type="match status" value="1"/>
</dbReference>
<dbReference type="Pfam" id="PF02272">
    <property type="entry name" value="DHHA1"/>
    <property type="match status" value="1"/>
</dbReference>
<dbReference type="Pfam" id="PF01411">
    <property type="entry name" value="tRNA-synt_2c"/>
    <property type="match status" value="1"/>
</dbReference>
<dbReference type="Pfam" id="PF07973">
    <property type="entry name" value="tRNA_SAD"/>
    <property type="match status" value="1"/>
</dbReference>
<dbReference type="PRINTS" id="PR00980">
    <property type="entry name" value="TRNASYNTHALA"/>
</dbReference>
<dbReference type="SMART" id="SM00863">
    <property type="entry name" value="tRNA_SAD"/>
    <property type="match status" value="1"/>
</dbReference>
<dbReference type="SUPFAM" id="SSF55681">
    <property type="entry name" value="Class II aaRS and biotin synthetases"/>
    <property type="match status" value="1"/>
</dbReference>
<dbReference type="SUPFAM" id="SSF101353">
    <property type="entry name" value="Putative anticodon-binding domain of alanyl-tRNA synthetase (AlaRS)"/>
    <property type="match status" value="1"/>
</dbReference>
<dbReference type="SUPFAM" id="SSF55186">
    <property type="entry name" value="ThrRS/AlaRS common domain"/>
    <property type="match status" value="1"/>
</dbReference>
<dbReference type="SUPFAM" id="SSF50447">
    <property type="entry name" value="Translation proteins"/>
    <property type="match status" value="1"/>
</dbReference>
<dbReference type="PROSITE" id="PS50860">
    <property type="entry name" value="AA_TRNA_LIGASE_II_ALA"/>
    <property type="match status" value="1"/>
</dbReference>
<organism>
    <name type="scientific">Prochlorococcus marinus (strain NATL2A)</name>
    <dbReference type="NCBI Taxonomy" id="59920"/>
    <lineage>
        <taxon>Bacteria</taxon>
        <taxon>Bacillati</taxon>
        <taxon>Cyanobacteriota</taxon>
        <taxon>Cyanophyceae</taxon>
        <taxon>Synechococcales</taxon>
        <taxon>Prochlorococcaceae</taxon>
        <taxon>Prochlorococcus</taxon>
    </lineage>
</organism>
<protein>
    <recommendedName>
        <fullName evidence="1">Alanine--tRNA ligase</fullName>
        <ecNumber evidence="1">6.1.1.7</ecNumber>
    </recommendedName>
    <alternativeName>
        <fullName evidence="1">Alanyl-tRNA synthetase</fullName>
        <shortName evidence="1">AlaRS</shortName>
    </alternativeName>
</protein>
<gene>
    <name evidence="1" type="primary">alaS</name>
    <name type="ordered locus">PMN2A_1377</name>
</gene>
<keyword id="KW-0030">Aminoacyl-tRNA synthetase</keyword>
<keyword id="KW-0067">ATP-binding</keyword>
<keyword id="KW-0963">Cytoplasm</keyword>
<keyword id="KW-0436">Ligase</keyword>
<keyword id="KW-0479">Metal-binding</keyword>
<keyword id="KW-0547">Nucleotide-binding</keyword>
<keyword id="KW-0648">Protein biosynthesis</keyword>
<keyword id="KW-1185">Reference proteome</keyword>
<keyword id="KW-0694">RNA-binding</keyword>
<keyword id="KW-0820">tRNA-binding</keyword>
<keyword id="KW-0862">Zinc</keyword>
<reference key="1">
    <citation type="journal article" date="2007" name="PLoS Genet.">
        <title>Patterns and implications of gene gain and loss in the evolution of Prochlorococcus.</title>
        <authorList>
            <person name="Kettler G.C."/>
            <person name="Martiny A.C."/>
            <person name="Huang K."/>
            <person name="Zucker J."/>
            <person name="Coleman M.L."/>
            <person name="Rodrigue S."/>
            <person name="Chen F."/>
            <person name="Lapidus A."/>
            <person name="Ferriera S."/>
            <person name="Johnson J."/>
            <person name="Steglich C."/>
            <person name="Church G.M."/>
            <person name="Richardson P."/>
            <person name="Chisholm S.W."/>
        </authorList>
    </citation>
    <scope>NUCLEOTIDE SEQUENCE [LARGE SCALE GENOMIC DNA]</scope>
    <source>
        <strain>NATL2A</strain>
    </source>
</reference>
<comment type="function">
    <text evidence="1">Catalyzes the attachment of alanine to tRNA(Ala) in a two-step reaction: alanine is first activated by ATP to form Ala-AMP and then transferred to the acceptor end of tRNA(Ala). Also edits incorrectly charged Ser-tRNA(Ala) and Gly-tRNA(Ala) via its editing domain.</text>
</comment>
<comment type="catalytic activity">
    <reaction evidence="1">
        <text>tRNA(Ala) + L-alanine + ATP = L-alanyl-tRNA(Ala) + AMP + diphosphate</text>
        <dbReference type="Rhea" id="RHEA:12540"/>
        <dbReference type="Rhea" id="RHEA-COMP:9657"/>
        <dbReference type="Rhea" id="RHEA-COMP:9923"/>
        <dbReference type="ChEBI" id="CHEBI:30616"/>
        <dbReference type="ChEBI" id="CHEBI:33019"/>
        <dbReference type="ChEBI" id="CHEBI:57972"/>
        <dbReference type="ChEBI" id="CHEBI:78442"/>
        <dbReference type="ChEBI" id="CHEBI:78497"/>
        <dbReference type="ChEBI" id="CHEBI:456215"/>
        <dbReference type="EC" id="6.1.1.7"/>
    </reaction>
</comment>
<comment type="cofactor">
    <cofactor evidence="1">
        <name>Zn(2+)</name>
        <dbReference type="ChEBI" id="CHEBI:29105"/>
    </cofactor>
    <text evidence="1">Binds 1 zinc ion per subunit.</text>
</comment>
<comment type="subcellular location">
    <subcellularLocation>
        <location evidence="1">Cytoplasm</location>
    </subcellularLocation>
</comment>
<comment type="domain">
    <text evidence="1">Consists of three domains; the N-terminal catalytic domain, the editing domain and the C-terminal C-Ala domain. The editing domain removes incorrectly charged amino acids, while the C-Ala domain, along with tRNA(Ala), serves as a bridge to cooperatively bring together the editing and aminoacylation centers thus stimulating deacylation of misacylated tRNAs.</text>
</comment>
<comment type="similarity">
    <text evidence="1">Belongs to the class-II aminoacyl-tRNA synthetase family.</text>
</comment>
<evidence type="ECO:0000255" key="1">
    <source>
        <dbReference type="HAMAP-Rule" id="MF_00036"/>
    </source>
</evidence>
<feature type="chain" id="PRO_0000347731" description="Alanine--tRNA ligase">
    <location>
        <begin position="1"/>
        <end position="886"/>
    </location>
</feature>
<feature type="binding site" evidence="1">
    <location>
        <position position="568"/>
    </location>
    <ligand>
        <name>Zn(2+)</name>
        <dbReference type="ChEBI" id="CHEBI:29105"/>
    </ligand>
</feature>
<feature type="binding site" evidence="1">
    <location>
        <position position="572"/>
    </location>
    <ligand>
        <name>Zn(2+)</name>
        <dbReference type="ChEBI" id="CHEBI:29105"/>
    </ligand>
</feature>
<feature type="binding site" evidence="1">
    <location>
        <position position="670"/>
    </location>
    <ligand>
        <name>Zn(2+)</name>
        <dbReference type="ChEBI" id="CHEBI:29105"/>
    </ligand>
</feature>
<feature type="binding site" evidence="1">
    <location>
        <position position="674"/>
    </location>
    <ligand>
        <name>Zn(2+)</name>
        <dbReference type="ChEBI" id="CHEBI:29105"/>
    </ligand>
</feature>
<proteinExistence type="inferred from homology"/>
<accession>Q46I13</accession>
<sequence length="886" mass="98223">MEKSSSSLIDPPSLSGDEIRDAFINFFVQHNHKKLASSSLIPDDPTVLLTIAGMLPFKPIFLGLKESSTPRATSSQKCIRTNDIENVGRTARHHTFFEMLGNFSFGDYFKKEAIQWAWELSTEVFRLNPQNIVISVFKEDLEAEQIWKEVVGVDANRIIRMGAADNFWSSGATGPCGPCSELYFDFKPELGSDEIDLEDDSRFIEFYNLVFMQYNRDLKGNLEPLANCHIDTGMGLERMAQILQKKSNNYETDLIFPLINAAALLAQIKYETTNKKNKTSLKIIGDHCRAVTHLICDGVSASNLGRGYILRRLIRRMIRHGRLVGIIQPFLPQLAEIAIELMKNAYPQLLEKKKIILNELKIEESRFLETLERGEKLLAEITSHECDLISGAQAFELYDTYGFPLELTEEIANEKGISVDINGFENEMAKQRKRAKEASVSIDLTEEGSIEREISLFDDTRFEGYEKLETTSTVIGIFKNNESVKQAVQGDLVKIIVNRTPFYAESGGQIGDKGLITSQDLEVSVENVRKKKNIFIHSGIVNTGVLEINSSVQMNVTPSFRQRTTSNHTATHLLQSALKLSIDSSVSQRGSLVSNHRLRFDFNAPKPLTIKELEDMEARINQWINEDHLIQIKTMPIKEAMAAGALAMFGEKYGDVVRVVDVPGISMELCGGTHVTRTSQLGTFKIINETGIASGIRRIEAIAGPSVLDYFNERDLVVKELSKSFKVQSYEIVERVSSLQLELKDKTKELIKVKNELALAKALGLATYAKSVGKSKLLIRRLDGVDGSGLQSAASSLIDHLGKYSAVIFGGIPNQEIDNKLVFVAAFSPDLVSDGLHAGKFISGVAKMCGGGGGGRPNLAQAGGSQPQSLDLALEKANENLTQQLS</sequence>
<name>SYA_PROMT</name>